<name>BLH_AGRFC</name>
<keyword id="KW-0378">Hydrolase</keyword>
<keyword id="KW-0479">Metal-binding</keyword>
<keyword id="KW-1185">Reference proteome</keyword>
<keyword id="KW-0862">Zinc</keyword>
<sequence length="431" mass="47163">MKAVRINERLTIAGQPMIADFPSLSAQGFKSIINARPDGEEPGQPGNTQEKSAAGAAGMDYGFIPVSGPTITEADIRAFQQKMAEAEGPVFAHCKGGTRALTLYVLGEALDGRIQRSDIEDFGKTHGFDLCAATRWLERQSAAVPHIKAFFDPRTWSVQYVVSDPATGGCAIIDPVYDFDEKSGATGTMNADAILDYVKRHGLSVEWILDTHPHADHFSAADYLKQKTGAKTAIGAKVTGVQKLWQEKYNWSDFKTDGSQWDQLFEAGDRFSIGSLEARVLFSPGHTLASVTYVVGNAAFVHDTLFMPDSGTARADFPGGSAKQLWASIQDILALPDDTRLFTGHDYQPGGRAPKWESTVGEQTRSNPHLAGMTEEDFVRLREARDRTLPMPKLILHALQVNIRGGRLPEPEANGKHYLKFPLDVLEGSTW</sequence>
<organism>
    <name type="scientific">Agrobacterium fabrum (strain C58 / ATCC 33970)</name>
    <name type="common">Agrobacterium tumefaciens (strain C58)</name>
    <dbReference type="NCBI Taxonomy" id="176299"/>
    <lineage>
        <taxon>Bacteria</taxon>
        <taxon>Pseudomonadati</taxon>
        <taxon>Pseudomonadota</taxon>
        <taxon>Alphaproteobacteria</taxon>
        <taxon>Hyphomicrobiales</taxon>
        <taxon>Rhizobiaceae</taxon>
        <taxon>Rhizobium/Agrobacterium group</taxon>
        <taxon>Agrobacterium</taxon>
        <taxon>Agrobacterium tumefaciens complex</taxon>
    </lineage>
</organism>
<comment type="function">
    <text evidence="5">Could play a role in cell adherence or biofilm development.</text>
</comment>
<comment type="cofactor">
    <cofactor evidence="1">
        <name>Zn(2+)</name>
        <dbReference type="ChEBI" id="CHEBI:29105"/>
    </cofactor>
</comment>
<comment type="induction">
    <text evidence="2">Repressed by BigR.</text>
</comment>
<comment type="miscellaneous">
    <text evidence="2">Part of an operon that comprises at least itself and bigR.</text>
</comment>
<comment type="similarity">
    <text evidence="4">Belongs to the metallo-beta-lactamase superfamily.</text>
</comment>
<feature type="chain" id="PRO_0000305338" description="Beta-lactamase hydrolase-like protein">
    <location>
        <begin position="1"/>
        <end position="431"/>
    </location>
</feature>
<feature type="binding site" evidence="1">
    <location>
        <position position="212"/>
    </location>
    <ligand>
        <name>Zn(2+)</name>
        <dbReference type="ChEBI" id="CHEBI:29105"/>
    </ligand>
</feature>
<feature type="binding site" evidence="1">
    <location>
        <position position="214"/>
    </location>
    <ligand>
        <name>Zn(2+)</name>
        <dbReference type="ChEBI" id="CHEBI:29105"/>
    </ligand>
</feature>
<feature type="binding site" evidence="1">
    <location>
        <position position="286"/>
    </location>
    <ligand>
        <name>Zn(2+)</name>
        <dbReference type="ChEBI" id="CHEBI:29105"/>
    </ligand>
</feature>
<feature type="binding site" evidence="1">
    <location>
        <position position="309"/>
    </location>
    <ligand>
        <name>substrate</name>
    </ligand>
</feature>
<protein>
    <recommendedName>
        <fullName evidence="3">Beta-lactamase hydrolase-like protein</fullName>
        <shortName evidence="3">BLH</shortName>
        <ecNumber>3.-.-.-</ecNumber>
    </recommendedName>
</protein>
<proteinExistence type="evidence at transcript level"/>
<accession>Q8UAA9</accession>
<accession>Q7CSJ2</accession>
<evidence type="ECO:0000250" key="1">
    <source>
        <dbReference type="UniProtKB" id="P25910"/>
    </source>
</evidence>
<evidence type="ECO:0000269" key="2">
    <source>
    </source>
</evidence>
<evidence type="ECO:0000303" key="3">
    <source>
    </source>
</evidence>
<evidence type="ECO:0000305" key="4"/>
<evidence type="ECO:0000305" key="5">
    <source>
    </source>
</evidence>
<dbReference type="EC" id="3.-.-.-"/>
<dbReference type="EMBL" id="AE007870">
    <property type="protein sequence ID" value="AAK89929.1"/>
    <property type="molecule type" value="Genomic_DNA"/>
</dbReference>
<dbReference type="PIR" id="AH2982">
    <property type="entry name" value="AH2982"/>
</dbReference>
<dbReference type="PIR" id="G98300">
    <property type="entry name" value="G98300"/>
</dbReference>
<dbReference type="RefSeq" id="NP_357144.1">
    <property type="nucleotide sequence ID" value="NC_003063.2"/>
</dbReference>
<dbReference type="RefSeq" id="WP_010973062.1">
    <property type="nucleotide sequence ID" value="NC_003063.2"/>
</dbReference>
<dbReference type="SMR" id="Q8UAA9"/>
<dbReference type="STRING" id="176299.Atu3465"/>
<dbReference type="EnsemblBacteria" id="AAK89929">
    <property type="protein sequence ID" value="AAK89929"/>
    <property type="gene ID" value="Atu3465"/>
</dbReference>
<dbReference type="GeneID" id="1135339"/>
<dbReference type="KEGG" id="atu:Atu3465"/>
<dbReference type="PATRIC" id="fig|176299.10.peg.3304"/>
<dbReference type="eggNOG" id="COG0491">
    <property type="taxonomic scope" value="Bacteria"/>
</dbReference>
<dbReference type="eggNOG" id="COG3453">
    <property type="taxonomic scope" value="Bacteria"/>
</dbReference>
<dbReference type="HOGENOM" id="CLU_030571_9_0_5"/>
<dbReference type="OrthoDB" id="9784009at2"/>
<dbReference type="PhylomeDB" id="Q8UAA9"/>
<dbReference type="BioCyc" id="AGRO:ATU3465-MONOMER"/>
<dbReference type="Proteomes" id="UP000000813">
    <property type="component" value="Chromosome linear"/>
</dbReference>
<dbReference type="GO" id="GO:0016787">
    <property type="term" value="F:hydrolase activity"/>
    <property type="evidence" value="ECO:0007669"/>
    <property type="project" value="UniProtKB-KW"/>
</dbReference>
<dbReference type="GO" id="GO:0046872">
    <property type="term" value="F:metal ion binding"/>
    <property type="evidence" value="ECO:0007669"/>
    <property type="project" value="UniProtKB-KW"/>
</dbReference>
<dbReference type="GO" id="GO:0050313">
    <property type="term" value="F:sulfur dioxygenase activity"/>
    <property type="evidence" value="ECO:0007669"/>
    <property type="project" value="InterPro"/>
</dbReference>
<dbReference type="GO" id="GO:0006749">
    <property type="term" value="P:glutathione metabolic process"/>
    <property type="evidence" value="ECO:0007669"/>
    <property type="project" value="InterPro"/>
</dbReference>
<dbReference type="GO" id="GO:0070813">
    <property type="term" value="P:hydrogen sulfide metabolic process"/>
    <property type="evidence" value="ECO:0007669"/>
    <property type="project" value="TreeGrafter"/>
</dbReference>
<dbReference type="CDD" id="cd07724">
    <property type="entry name" value="POD-like_MBL-fold"/>
    <property type="match status" value="1"/>
</dbReference>
<dbReference type="CDD" id="cd14503">
    <property type="entry name" value="PTP-bact"/>
    <property type="match status" value="1"/>
</dbReference>
<dbReference type="Gene3D" id="3.90.190.10">
    <property type="entry name" value="Protein tyrosine phosphatase superfamily"/>
    <property type="match status" value="1"/>
</dbReference>
<dbReference type="Gene3D" id="3.60.15.10">
    <property type="entry name" value="Ribonuclease Z/Hydroxyacylglutathione hydrolase-like"/>
    <property type="match status" value="1"/>
</dbReference>
<dbReference type="InterPro" id="IPR005939">
    <property type="entry name" value="BLH_phosphatase-like"/>
</dbReference>
<dbReference type="InterPro" id="IPR053449">
    <property type="entry name" value="MBL-like_hydrolase"/>
</dbReference>
<dbReference type="InterPro" id="IPR001279">
    <property type="entry name" value="Metallo-B-lactamas"/>
</dbReference>
<dbReference type="InterPro" id="IPR051682">
    <property type="entry name" value="Mito_Persulfide_Diox"/>
</dbReference>
<dbReference type="InterPro" id="IPR044528">
    <property type="entry name" value="POD-like_MBL-fold"/>
</dbReference>
<dbReference type="InterPro" id="IPR029021">
    <property type="entry name" value="Prot-tyrosine_phosphatase-like"/>
</dbReference>
<dbReference type="InterPro" id="IPR036866">
    <property type="entry name" value="RibonucZ/Hydroxyglut_hydro"/>
</dbReference>
<dbReference type="NCBIfam" id="NF040641">
    <property type="entry name" value="bifunc_ST_SDO"/>
    <property type="match status" value="1"/>
</dbReference>
<dbReference type="NCBIfam" id="TIGR01244">
    <property type="entry name" value="TIGR01244 family sulfur transferase"/>
    <property type="match status" value="1"/>
</dbReference>
<dbReference type="PANTHER" id="PTHR43084">
    <property type="entry name" value="PERSULFIDE DIOXYGENASE ETHE1"/>
    <property type="match status" value="1"/>
</dbReference>
<dbReference type="PANTHER" id="PTHR43084:SF1">
    <property type="entry name" value="PERSULFIDE DIOXYGENASE ETHE1, MITOCHONDRIAL"/>
    <property type="match status" value="1"/>
</dbReference>
<dbReference type="Pfam" id="PF04273">
    <property type="entry name" value="BLH_phosphatase"/>
    <property type="match status" value="1"/>
</dbReference>
<dbReference type="Pfam" id="PF00753">
    <property type="entry name" value="Lactamase_B"/>
    <property type="match status" value="1"/>
</dbReference>
<dbReference type="SMART" id="SM00849">
    <property type="entry name" value="Lactamase_B"/>
    <property type="match status" value="1"/>
</dbReference>
<dbReference type="SUPFAM" id="SSF52799">
    <property type="entry name" value="(Phosphotyrosine protein) phosphatases II"/>
    <property type="match status" value="1"/>
</dbReference>
<dbReference type="SUPFAM" id="SSF56281">
    <property type="entry name" value="Metallo-hydrolase/oxidoreductase"/>
    <property type="match status" value="1"/>
</dbReference>
<reference key="1">
    <citation type="journal article" date="2001" name="Science">
        <title>The genome of the natural genetic engineer Agrobacterium tumefaciens C58.</title>
        <authorList>
            <person name="Wood D.W."/>
            <person name="Setubal J.C."/>
            <person name="Kaul R."/>
            <person name="Monks D.E."/>
            <person name="Kitajima J.P."/>
            <person name="Okura V.K."/>
            <person name="Zhou Y."/>
            <person name="Chen L."/>
            <person name="Wood G.E."/>
            <person name="Almeida N.F. Jr."/>
            <person name="Woo L."/>
            <person name="Chen Y."/>
            <person name="Paulsen I.T."/>
            <person name="Eisen J.A."/>
            <person name="Karp P.D."/>
            <person name="Bovee D. Sr."/>
            <person name="Chapman P."/>
            <person name="Clendenning J."/>
            <person name="Deatherage G."/>
            <person name="Gillet W."/>
            <person name="Grant C."/>
            <person name="Kutyavin T."/>
            <person name="Levy R."/>
            <person name="Li M.-J."/>
            <person name="McClelland E."/>
            <person name="Palmieri A."/>
            <person name="Raymond C."/>
            <person name="Rouse G."/>
            <person name="Saenphimmachak C."/>
            <person name="Wu Z."/>
            <person name="Romero P."/>
            <person name="Gordon D."/>
            <person name="Zhang S."/>
            <person name="Yoo H."/>
            <person name="Tao Y."/>
            <person name="Biddle P."/>
            <person name="Jung M."/>
            <person name="Krespan W."/>
            <person name="Perry M."/>
            <person name="Gordon-Kamm B."/>
            <person name="Liao L."/>
            <person name="Kim S."/>
            <person name="Hendrick C."/>
            <person name="Zhao Z.-Y."/>
            <person name="Dolan M."/>
            <person name="Chumley F."/>
            <person name="Tingey S.V."/>
            <person name="Tomb J.-F."/>
            <person name="Gordon M.P."/>
            <person name="Olson M.V."/>
            <person name="Nester E.W."/>
        </authorList>
    </citation>
    <scope>NUCLEOTIDE SEQUENCE [LARGE SCALE GENOMIC DNA]</scope>
    <source>
        <strain>C58 / ATCC 33970</strain>
    </source>
</reference>
<reference key="2">
    <citation type="journal article" date="2001" name="Science">
        <title>Genome sequence of the plant pathogen and biotechnology agent Agrobacterium tumefaciens C58.</title>
        <authorList>
            <person name="Goodner B."/>
            <person name="Hinkle G."/>
            <person name="Gattung S."/>
            <person name="Miller N."/>
            <person name="Blanchard M."/>
            <person name="Qurollo B."/>
            <person name="Goldman B.S."/>
            <person name="Cao Y."/>
            <person name="Askenazi M."/>
            <person name="Halling C."/>
            <person name="Mullin L."/>
            <person name="Houmiel K."/>
            <person name="Gordon J."/>
            <person name="Vaudin M."/>
            <person name="Iartchouk O."/>
            <person name="Epp A."/>
            <person name="Liu F."/>
            <person name="Wollam C."/>
            <person name="Allinger M."/>
            <person name="Doughty D."/>
            <person name="Scott C."/>
            <person name="Lappas C."/>
            <person name="Markelz B."/>
            <person name="Flanagan C."/>
            <person name="Crowell C."/>
            <person name="Gurson J."/>
            <person name="Lomo C."/>
            <person name="Sear C."/>
            <person name="Strub G."/>
            <person name="Cielo C."/>
            <person name="Slater S."/>
        </authorList>
    </citation>
    <scope>NUCLEOTIDE SEQUENCE [LARGE SCALE GENOMIC DNA]</scope>
    <source>
        <strain>C58 / ATCC 33970</strain>
    </source>
</reference>
<reference key="3">
    <citation type="journal article" date="2007" name="J. Bacteriol.">
        <title>BigR, a transcriptional repressor from plant-associated bacteria, regulates an operon implicated in biofilm growth.</title>
        <authorList>
            <person name="Barbosa R.L."/>
            <person name="Benedetti C.E."/>
        </authorList>
    </citation>
    <scope>INDUCTION BY BIGR</scope>
    <source>
        <strain>C58 / ATCC 33970</strain>
    </source>
</reference>
<gene>
    <name evidence="3" type="primary">blh</name>
    <name type="ordered locus">Atu3465</name>
    <name type="ORF">AGR_L_2726</name>
</gene>